<reference key="1">
    <citation type="journal article" date="2005" name="Nature">
        <title>The genome of the social amoeba Dictyostelium discoideum.</title>
        <authorList>
            <person name="Eichinger L."/>
            <person name="Pachebat J.A."/>
            <person name="Gloeckner G."/>
            <person name="Rajandream M.A."/>
            <person name="Sucgang R."/>
            <person name="Berriman M."/>
            <person name="Song J."/>
            <person name="Olsen R."/>
            <person name="Szafranski K."/>
            <person name="Xu Q."/>
            <person name="Tunggal B."/>
            <person name="Kummerfeld S."/>
            <person name="Madera M."/>
            <person name="Konfortov B.A."/>
            <person name="Rivero F."/>
            <person name="Bankier A.T."/>
            <person name="Lehmann R."/>
            <person name="Hamlin N."/>
            <person name="Davies R."/>
            <person name="Gaudet P."/>
            <person name="Fey P."/>
            <person name="Pilcher K."/>
            <person name="Chen G."/>
            <person name="Saunders D."/>
            <person name="Sodergren E.J."/>
            <person name="Davis P."/>
            <person name="Kerhornou A."/>
            <person name="Nie X."/>
            <person name="Hall N."/>
            <person name="Anjard C."/>
            <person name="Hemphill L."/>
            <person name="Bason N."/>
            <person name="Farbrother P."/>
            <person name="Desany B."/>
            <person name="Just E."/>
            <person name="Morio T."/>
            <person name="Rost R."/>
            <person name="Churcher C.M."/>
            <person name="Cooper J."/>
            <person name="Haydock S."/>
            <person name="van Driessche N."/>
            <person name="Cronin A."/>
            <person name="Goodhead I."/>
            <person name="Muzny D.M."/>
            <person name="Mourier T."/>
            <person name="Pain A."/>
            <person name="Lu M."/>
            <person name="Harper D."/>
            <person name="Lindsay R."/>
            <person name="Hauser H."/>
            <person name="James K.D."/>
            <person name="Quiles M."/>
            <person name="Madan Babu M."/>
            <person name="Saito T."/>
            <person name="Buchrieser C."/>
            <person name="Wardroper A."/>
            <person name="Felder M."/>
            <person name="Thangavelu M."/>
            <person name="Johnson D."/>
            <person name="Knights A."/>
            <person name="Loulseged H."/>
            <person name="Mungall K.L."/>
            <person name="Oliver K."/>
            <person name="Price C."/>
            <person name="Quail M.A."/>
            <person name="Urushihara H."/>
            <person name="Hernandez J."/>
            <person name="Rabbinowitsch E."/>
            <person name="Steffen D."/>
            <person name="Sanders M."/>
            <person name="Ma J."/>
            <person name="Kohara Y."/>
            <person name="Sharp S."/>
            <person name="Simmonds M.N."/>
            <person name="Spiegler S."/>
            <person name="Tivey A."/>
            <person name="Sugano S."/>
            <person name="White B."/>
            <person name="Walker D."/>
            <person name="Woodward J.R."/>
            <person name="Winckler T."/>
            <person name="Tanaka Y."/>
            <person name="Shaulsky G."/>
            <person name="Schleicher M."/>
            <person name="Weinstock G.M."/>
            <person name="Rosenthal A."/>
            <person name="Cox E.C."/>
            <person name="Chisholm R.L."/>
            <person name="Gibbs R.A."/>
            <person name="Loomis W.F."/>
            <person name="Platzer M."/>
            <person name="Kay R.R."/>
            <person name="Williams J.G."/>
            <person name="Dear P.H."/>
            <person name="Noegel A.A."/>
            <person name="Barrell B.G."/>
            <person name="Kuspa A."/>
        </authorList>
    </citation>
    <scope>NUCLEOTIDE SEQUENCE [LARGE SCALE GENOMIC DNA]</scope>
    <source>
        <strain>AX4</strain>
    </source>
</reference>
<reference key="2">
    <citation type="journal article" date="2003" name="Curr. Biol.">
        <title>PIR121 regulates pseudopod dynamics and SCAR activity in Dictyostelium.</title>
        <authorList>
            <person name="Blagg S.L."/>
            <person name="Stewart M."/>
            <person name="Sambles C."/>
            <person name="Insall R.H."/>
        </authorList>
    </citation>
    <scope>IDENTIFICATION</scope>
</reference>
<reference key="3">
    <citation type="journal article" date="2007" name="Mol. Biol. Cell">
        <title>The N-terminus of Dictyostelium Scar interacts with Abi and HSPC300 and is essential for proper regulation and function.</title>
        <authorList>
            <person name="Caracino D."/>
            <person name="Jones C."/>
            <person name="Compton M."/>
            <person name="Saxe C.L. III"/>
        </authorList>
    </citation>
    <scope>IDENTIFICATION IN THE WAVE COMPLEX</scope>
    <scope>INTERACTION WITH SCRA</scope>
    <scope>FUNCTION</scope>
</reference>
<evidence type="ECO:0000250" key="1"/>
<evidence type="ECO:0000255" key="2"/>
<evidence type="ECO:0000269" key="3">
    <source>
    </source>
</evidence>
<evidence type="ECO:0000305" key="4"/>
<evidence type="ECO:0007829" key="5">
    <source>
        <dbReference type="PDB" id="3PP5"/>
    </source>
</evidence>
<name>BRK1_DICDI</name>
<accession>Q54X65</accession>
<protein>
    <recommendedName>
        <fullName>Protein BRICK1</fullName>
    </recommendedName>
</protein>
<dbReference type="EMBL" id="AAFI02000029">
    <property type="protein sequence ID" value="EAL67856.1"/>
    <property type="molecule type" value="Genomic_DNA"/>
</dbReference>
<dbReference type="RefSeq" id="XP_641829.1">
    <property type="nucleotide sequence ID" value="XM_636737.1"/>
</dbReference>
<dbReference type="PDB" id="3PP5">
    <property type="method" value="X-ray"/>
    <property type="resolution" value="1.50 A"/>
    <property type="chains" value="A=1-68"/>
</dbReference>
<dbReference type="PDBsum" id="3PP5"/>
<dbReference type="SMR" id="Q54X65"/>
<dbReference type="FunCoup" id="Q54X65">
    <property type="interactions" value="80"/>
</dbReference>
<dbReference type="IntAct" id="Q54X65">
    <property type="interactions" value="1"/>
</dbReference>
<dbReference type="STRING" id="44689.Q54X65"/>
<dbReference type="PaxDb" id="44689-DDB0231424"/>
<dbReference type="EnsemblProtists" id="EAL67856">
    <property type="protein sequence ID" value="EAL67856"/>
    <property type="gene ID" value="DDB_G0279175"/>
</dbReference>
<dbReference type="GeneID" id="8621907"/>
<dbReference type="KEGG" id="ddi:DDB_G0279175"/>
<dbReference type="dictyBase" id="DDB_G0279175">
    <property type="gene designation" value="hspc300"/>
</dbReference>
<dbReference type="VEuPathDB" id="AmoebaDB:DDB_G0279175"/>
<dbReference type="eggNOG" id="ENOG502S3PY">
    <property type="taxonomic scope" value="Eukaryota"/>
</dbReference>
<dbReference type="HOGENOM" id="CLU_175202_0_0_1"/>
<dbReference type="InParanoid" id="Q54X65"/>
<dbReference type="OMA" id="WEQREFI"/>
<dbReference type="PhylomeDB" id="Q54X65"/>
<dbReference type="Reactome" id="R-DDI-2029482">
    <property type="pathway name" value="Regulation of actin dynamics for phagocytic cup formation"/>
</dbReference>
<dbReference type="Reactome" id="R-DDI-5663213">
    <property type="pathway name" value="RHO GTPases Activate WASPs and WAVEs"/>
</dbReference>
<dbReference type="Reactome" id="R-DDI-9013149">
    <property type="pathway name" value="RAC1 GTPase cycle"/>
</dbReference>
<dbReference type="Reactome" id="R-DDI-9013404">
    <property type="pathway name" value="RAC2 GTPase cycle"/>
</dbReference>
<dbReference type="Reactome" id="R-DDI-9013423">
    <property type="pathway name" value="RAC3 GTPase cycle"/>
</dbReference>
<dbReference type="EvolutionaryTrace" id="Q54X65"/>
<dbReference type="PRO" id="PR:Q54X65"/>
<dbReference type="Proteomes" id="UP000002195">
    <property type="component" value="Chromosome 3"/>
</dbReference>
<dbReference type="GO" id="GO:0031252">
    <property type="term" value="C:cell leading edge"/>
    <property type="evidence" value="ECO:0000314"/>
    <property type="project" value="dictyBase"/>
</dbReference>
<dbReference type="GO" id="GO:0060187">
    <property type="term" value="C:cell pole"/>
    <property type="evidence" value="ECO:0000314"/>
    <property type="project" value="dictyBase"/>
</dbReference>
<dbReference type="GO" id="GO:0005911">
    <property type="term" value="C:cell-cell junction"/>
    <property type="evidence" value="ECO:0000314"/>
    <property type="project" value="dictyBase"/>
</dbReference>
<dbReference type="GO" id="GO:0005856">
    <property type="term" value="C:cytoskeleton"/>
    <property type="evidence" value="ECO:0007669"/>
    <property type="project" value="UniProtKB-SubCell"/>
</dbReference>
<dbReference type="GO" id="GO:0032433">
    <property type="term" value="C:filopodium tip"/>
    <property type="evidence" value="ECO:0000314"/>
    <property type="project" value="dictyBase"/>
</dbReference>
<dbReference type="GO" id="GO:0031143">
    <property type="term" value="C:pseudopodium"/>
    <property type="evidence" value="ECO:0000314"/>
    <property type="project" value="dictyBase"/>
</dbReference>
<dbReference type="GO" id="GO:0031209">
    <property type="term" value="C:SCAR complex"/>
    <property type="evidence" value="ECO:0000314"/>
    <property type="project" value="dictyBase"/>
</dbReference>
<dbReference type="GO" id="GO:0042802">
    <property type="term" value="F:identical protein binding"/>
    <property type="evidence" value="ECO:0000353"/>
    <property type="project" value="dictyBase"/>
</dbReference>
<dbReference type="GO" id="GO:0060090">
    <property type="term" value="F:molecular adaptor activity"/>
    <property type="evidence" value="ECO:0000314"/>
    <property type="project" value="dictyBase"/>
</dbReference>
<dbReference type="GO" id="GO:0044877">
    <property type="term" value="F:protein-containing complex binding"/>
    <property type="evidence" value="ECO:0007669"/>
    <property type="project" value="InterPro"/>
</dbReference>
<dbReference type="GO" id="GO:0007015">
    <property type="term" value="P:actin filament organization"/>
    <property type="evidence" value="ECO:0007669"/>
    <property type="project" value="InterPro"/>
</dbReference>
<dbReference type="GO" id="GO:0048870">
    <property type="term" value="P:cell motility"/>
    <property type="evidence" value="ECO:0000315"/>
    <property type="project" value="dictyBase"/>
</dbReference>
<dbReference type="GO" id="GO:0046847">
    <property type="term" value="P:filopodium assembly"/>
    <property type="evidence" value="ECO:0000315"/>
    <property type="project" value="dictyBase"/>
</dbReference>
<dbReference type="GO" id="GO:0000281">
    <property type="term" value="P:mitotic cytokinesis"/>
    <property type="evidence" value="ECO:0000315"/>
    <property type="project" value="dictyBase"/>
</dbReference>
<dbReference type="GO" id="GO:0031269">
    <property type="term" value="P:pseudopodium assembly"/>
    <property type="evidence" value="ECO:0000315"/>
    <property type="project" value="dictyBase"/>
</dbReference>
<dbReference type="GO" id="GO:0008064">
    <property type="term" value="P:regulation of actin polymerization or depolymerization"/>
    <property type="evidence" value="ECO:0000315"/>
    <property type="project" value="dictyBase"/>
</dbReference>
<dbReference type="FunFam" id="1.20.5.110:FF:000229">
    <property type="entry name" value="Protein BRICK1"/>
    <property type="match status" value="1"/>
</dbReference>
<dbReference type="Gene3D" id="1.20.5.110">
    <property type="match status" value="1"/>
</dbReference>
<dbReference type="InterPro" id="IPR033378">
    <property type="entry name" value="BRICK1"/>
</dbReference>
<dbReference type="PANTHER" id="PTHR33668">
    <property type="entry name" value="PROTEIN BRICK1"/>
    <property type="match status" value="1"/>
</dbReference>
<dbReference type="PANTHER" id="PTHR33668:SF1">
    <property type="entry name" value="PROTEIN BRICK1"/>
    <property type="match status" value="1"/>
</dbReference>
<proteinExistence type="evidence at protein level"/>
<feature type="chain" id="PRO_0000331406" description="Protein BRICK1">
    <location>
        <begin position="1"/>
        <end position="68"/>
    </location>
</feature>
<feature type="coiled-coil region" evidence="2">
    <location>
        <begin position="37"/>
        <end position="62"/>
    </location>
</feature>
<feature type="helix" evidence="5">
    <location>
        <begin position="6"/>
        <end position="64"/>
    </location>
</feature>
<organism>
    <name type="scientific">Dictyostelium discoideum</name>
    <name type="common">Social amoeba</name>
    <dbReference type="NCBI Taxonomy" id="44689"/>
    <lineage>
        <taxon>Eukaryota</taxon>
        <taxon>Amoebozoa</taxon>
        <taxon>Evosea</taxon>
        <taxon>Eumycetozoa</taxon>
        <taxon>Dictyostelia</taxon>
        <taxon>Dictyosteliales</taxon>
        <taxon>Dictyosteliaceae</taxon>
        <taxon>Dictyostelium</taxon>
    </lineage>
</organism>
<comment type="function">
    <text evidence="3">Involved in regulation of actin and microtubule organization.</text>
</comment>
<comment type="subunit">
    <text evidence="3">Part of a Scar/WAVE complex containing brk1, scrA, abiA, pirA and napA. Interacts with scrA.</text>
</comment>
<comment type="interaction">
    <interactant intactId="EBI-1808171">
        <id>Q54X65</id>
    </interactant>
    <interactant intactId="EBI-1808146">
        <id>Q54NF8</id>
        <label>scrA</label>
    </interactant>
    <organismsDiffer>false</organismsDiffer>
    <experiments>3</experiments>
</comment>
<comment type="subcellular location">
    <subcellularLocation>
        <location evidence="1">Cytoplasm</location>
        <location evidence="1">Cytoskeleton</location>
    </subcellularLocation>
</comment>
<comment type="similarity">
    <text evidence="4">Belongs to the BRK1 family.</text>
</comment>
<sequence>MSTKTNIQKDWEQREFIEDMSINIQKIVEFLNKFELSTRNKLSDLNEKLTILDRQVDYLEATFKTVQE</sequence>
<gene>
    <name type="primary">brk1</name>
    <name type="synonym">hspc300</name>
    <name type="ORF">DDB_G0279175</name>
</gene>
<keyword id="KW-0002">3D-structure</keyword>
<keyword id="KW-0175">Coiled coil</keyword>
<keyword id="KW-0963">Cytoplasm</keyword>
<keyword id="KW-0206">Cytoskeleton</keyword>
<keyword id="KW-1185">Reference proteome</keyword>